<feature type="chain" id="PRO_0000079679" description="28 kDa cell wall protein">
    <location>
        <begin position="1"/>
        <end position="15" status="greater than"/>
    </location>
</feature>
<feature type="non-terminal residue" evidence="2">
    <location>
        <position position="15"/>
    </location>
</feature>
<protein>
    <recommendedName>
        <fullName>28 kDa cell wall protein</fullName>
    </recommendedName>
</protein>
<comment type="subcellular location">
    <subcellularLocation>
        <location evidence="1">Secreted</location>
        <location evidence="1">Cell wall</location>
    </subcellularLocation>
</comment>
<name>CWP16_TOBAC</name>
<dbReference type="PaxDb" id="4097-P80793"/>
<dbReference type="Proteomes" id="UP000084051">
    <property type="component" value="Unplaced"/>
</dbReference>
<dbReference type="GO" id="GO:0005576">
    <property type="term" value="C:extracellular region"/>
    <property type="evidence" value="ECO:0007669"/>
    <property type="project" value="UniProtKB-KW"/>
</dbReference>
<accession>P80793</accession>
<sequence>IWVGISYKIHSLYFQ</sequence>
<reference evidence="3" key="1">
    <citation type="journal article" date="1997" name="J. Biol. Chem.">
        <title>Differential extraction and protein sequencing reveals major differences in patterns of primary cell wall proteins from plants.</title>
        <authorList>
            <person name="Robertson D."/>
            <person name="Mitchell G.P."/>
            <person name="Gilroy J.S."/>
            <person name="Gerrish C."/>
            <person name="Bolwell G.P."/>
            <person name="Slabas A.R."/>
        </authorList>
    </citation>
    <scope>PROTEIN SEQUENCE</scope>
    <scope>SUBCELLULAR LOCATION</scope>
</reference>
<keyword id="KW-0134">Cell wall</keyword>
<keyword id="KW-0903">Direct protein sequencing</keyword>
<keyword id="KW-1185">Reference proteome</keyword>
<keyword id="KW-0964">Secreted</keyword>
<proteinExistence type="evidence at protein level"/>
<organism>
    <name type="scientific">Nicotiana tabacum</name>
    <name type="common">Common tobacco</name>
    <dbReference type="NCBI Taxonomy" id="4097"/>
    <lineage>
        <taxon>Eukaryota</taxon>
        <taxon>Viridiplantae</taxon>
        <taxon>Streptophyta</taxon>
        <taxon>Embryophyta</taxon>
        <taxon>Tracheophyta</taxon>
        <taxon>Spermatophyta</taxon>
        <taxon>Magnoliopsida</taxon>
        <taxon>eudicotyledons</taxon>
        <taxon>Gunneridae</taxon>
        <taxon>Pentapetalae</taxon>
        <taxon>asterids</taxon>
        <taxon>lamiids</taxon>
        <taxon>Solanales</taxon>
        <taxon>Solanaceae</taxon>
        <taxon>Nicotianoideae</taxon>
        <taxon>Nicotianeae</taxon>
        <taxon>Nicotiana</taxon>
    </lineage>
</organism>
<evidence type="ECO:0000269" key="1">
    <source>
    </source>
</evidence>
<evidence type="ECO:0000303" key="2">
    <source>
    </source>
</evidence>
<evidence type="ECO:0000305" key="3"/>